<proteinExistence type="inferred from homology"/>
<organism>
    <name type="scientific">Idiomarina loihiensis (strain ATCC BAA-735 / DSM 15497 / L2-TR)</name>
    <dbReference type="NCBI Taxonomy" id="283942"/>
    <lineage>
        <taxon>Bacteria</taxon>
        <taxon>Pseudomonadati</taxon>
        <taxon>Pseudomonadota</taxon>
        <taxon>Gammaproteobacteria</taxon>
        <taxon>Alteromonadales</taxon>
        <taxon>Idiomarinaceae</taxon>
        <taxon>Idiomarina</taxon>
    </lineage>
</organism>
<name>QUEA_IDILO</name>
<reference key="1">
    <citation type="journal article" date="2004" name="Proc. Natl. Acad. Sci. U.S.A.">
        <title>Genome sequence of the deep-sea gamma-proteobacterium Idiomarina loihiensis reveals amino acid fermentation as a source of carbon and energy.</title>
        <authorList>
            <person name="Hou S."/>
            <person name="Saw J.H."/>
            <person name="Lee K.S."/>
            <person name="Freitas T.A."/>
            <person name="Belisle C."/>
            <person name="Kawarabayasi Y."/>
            <person name="Donachie S.P."/>
            <person name="Pikina A."/>
            <person name="Galperin M.Y."/>
            <person name="Koonin E.V."/>
            <person name="Makarova K.S."/>
            <person name="Omelchenko M.V."/>
            <person name="Sorokin A."/>
            <person name="Wolf Y.I."/>
            <person name="Li Q.X."/>
            <person name="Keum Y.S."/>
            <person name="Campbell S."/>
            <person name="Denery J."/>
            <person name="Aizawa S."/>
            <person name="Shibata S."/>
            <person name="Malahoff A."/>
            <person name="Alam M."/>
        </authorList>
    </citation>
    <scope>NUCLEOTIDE SEQUENCE [LARGE SCALE GENOMIC DNA]</scope>
    <source>
        <strain>ATCC BAA-735 / DSM 15497 / L2-TR</strain>
    </source>
</reference>
<gene>
    <name evidence="1" type="primary">queA</name>
    <name type="ordered locus">IL2206</name>
</gene>
<keyword id="KW-0963">Cytoplasm</keyword>
<keyword id="KW-0671">Queuosine biosynthesis</keyword>
<keyword id="KW-1185">Reference proteome</keyword>
<keyword id="KW-0949">S-adenosyl-L-methionine</keyword>
<keyword id="KW-0808">Transferase</keyword>
<comment type="function">
    <text evidence="1">Transfers and isomerizes the ribose moiety from AdoMet to the 7-aminomethyl group of 7-deazaguanine (preQ1-tRNA) to give epoxyqueuosine (oQ-tRNA).</text>
</comment>
<comment type="catalytic activity">
    <reaction evidence="1">
        <text>7-aminomethyl-7-carbaguanosine(34) in tRNA + S-adenosyl-L-methionine = epoxyqueuosine(34) in tRNA + adenine + L-methionine + 2 H(+)</text>
        <dbReference type="Rhea" id="RHEA:32155"/>
        <dbReference type="Rhea" id="RHEA-COMP:10342"/>
        <dbReference type="Rhea" id="RHEA-COMP:18582"/>
        <dbReference type="ChEBI" id="CHEBI:15378"/>
        <dbReference type="ChEBI" id="CHEBI:16708"/>
        <dbReference type="ChEBI" id="CHEBI:57844"/>
        <dbReference type="ChEBI" id="CHEBI:59789"/>
        <dbReference type="ChEBI" id="CHEBI:82833"/>
        <dbReference type="ChEBI" id="CHEBI:194443"/>
        <dbReference type="EC" id="2.4.99.17"/>
    </reaction>
</comment>
<comment type="pathway">
    <text evidence="1">tRNA modification; tRNA-queuosine biosynthesis.</text>
</comment>
<comment type="subunit">
    <text evidence="1">Monomer.</text>
</comment>
<comment type="subcellular location">
    <subcellularLocation>
        <location evidence="1">Cytoplasm</location>
    </subcellularLocation>
</comment>
<comment type="similarity">
    <text evidence="1">Belongs to the QueA family.</text>
</comment>
<sequence length="351" mass="39463">MSDTNHSTLKVSDFSFELPDELIARYPQEQRSASRLLSVKANENSIEHKHFKNIVDEINAGDLLVFNDTRVIPARLLGEKVSGGKVEVLVERLLDDHRVLAHVRANRAPKAGAELLLEGHVKITMLARHDALFELKFEHDETVLELLEQYGHMPLPPYIDRPDESSDKERYQTVYNREPGAVAAPTAGLHFDDEILQQLRDKGVNSAYVTLHVGAGTFQPVRVEDINDHVMHSEYAKVSAETCNAIKQTKASGGRVIAVGTTSVRSLESAAQASTNESIEPFFDDTNIFIYPGYEFKVVDSMITNFHLPESTLIMLVSAFVGRDLIMKAYNEAIKERYRFFSYGDAMLLQR</sequence>
<dbReference type="EC" id="2.4.99.17" evidence="1"/>
<dbReference type="EMBL" id="AE017340">
    <property type="protein sequence ID" value="AAV83038.1"/>
    <property type="molecule type" value="Genomic_DNA"/>
</dbReference>
<dbReference type="RefSeq" id="WP_011235433.1">
    <property type="nucleotide sequence ID" value="NC_006512.1"/>
</dbReference>
<dbReference type="SMR" id="Q5QVL1"/>
<dbReference type="STRING" id="283942.IL2206"/>
<dbReference type="GeneID" id="41337395"/>
<dbReference type="KEGG" id="ilo:IL2206"/>
<dbReference type="eggNOG" id="COG0809">
    <property type="taxonomic scope" value="Bacteria"/>
</dbReference>
<dbReference type="HOGENOM" id="CLU_039110_1_0_6"/>
<dbReference type="OrthoDB" id="9805933at2"/>
<dbReference type="UniPathway" id="UPA00392"/>
<dbReference type="Proteomes" id="UP000001171">
    <property type="component" value="Chromosome"/>
</dbReference>
<dbReference type="GO" id="GO:0005737">
    <property type="term" value="C:cytoplasm"/>
    <property type="evidence" value="ECO:0007669"/>
    <property type="project" value="UniProtKB-SubCell"/>
</dbReference>
<dbReference type="GO" id="GO:0051075">
    <property type="term" value="F:S-adenosylmethionine:tRNA ribosyltransferase-isomerase activity"/>
    <property type="evidence" value="ECO:0007669"/>
    <property type="project" value="UniProtKB-EC"/>
</dbReference>
<dbReference type="GO" id="GO:0008616">
    <property type="term" value="P:queuosine biosynthetic process"/>
    <property type="evidence" value="ECO:0007669"/>
    <property type="project" value="UniProtKB-UniRule"/>
</dbReference>
<dbReference type="GO" id="GO:0002099">
    <property type="term" value="P:tRNA wobble guanine modification"/>
    <property type="evidence" value="ECO:0007669"/>
    <property type="project" value="TreeGrafter"/>
</dbReference>
<dbReference type="FunFam" id="2.40.10.240:FF:000001">
    <property type="entry name" value="S-adenosylmethionine:tRNA ribosyltransferase-isomerase"/>
    <property type="match status" value="1"/>
</dbReference>
<dbReference type="FunFam" id="3.40.1780.10:FF:000001">
    <property type="entry name" value="S-adenosylmethionine:tRNA ribosyltransferase-isomerase"/>
    <property type="match status" value="1"/>
</dbReference>
<dbReference type="Gene3D" id="2.40.10.240">
    <property type="entry name" value="QueA-like"/>
    <property type="match status" value="1"/>
</dbReference>
<dbReference type="Gene3D" id="3.40.1780.10">
    <property type="entry name" value="QueA-like"/>
    <property type="match status" value="1"/>
</dbReference>
<dbReference type="HAMAP" id="MF_00113">
    <property type="entry name" value="QueA"/>
    <property type="match status" value="1"/>
</dbReference>
<dbReference type="InterPro" id="IPR003699">
    <property type="entry name" value="QueA"/>
</dbReference>
<dbReference type="InterPro" id="IPR042118">
    <property type="entry name" value="QueA_dom1"/>
</dbReference>
<dbReference type="InterPro" id="IPR042119">
    <property type="entry name" value="QueA_dom2"/>
</dbReference>
<dbReference type="InterPro" id="IPR036100">
    <property type="entry name" value="QueA_sf"/>
</dbReference>
<dbReference type="NCBIfam" id="NF001140">
    <property type="entry name" value="PRK00147.1"/>
    <property type="match status" value="1"/>
</dbReference>
<dbReference type="NCBIfam" id="TIGR00113">
    <property type="entry name" value="queA"/>
    <property type="match status" value="1"/>
</dbReference>
<dbReference type="PANTHER" id="PTHR30307">
    <property type="entry name" value="S-ADENOSYLMETHIONINE:TRNA RIBOSYLTRANSFERASE-ISOMERASE"/>
    <property type="match status" value="1"/>
</dbReference>
<dbReference type="PANTHER" id="PTHR30307:SF0">
    <property type="entry name" value="S-ADENOSYLMETHIONINE:TRNA RIBOSYLTRANSFERASE-ISOMERASE"/>
    <property type="match status" value="1"/>
</dbReference>
<dbReference type="Pfam" id="PF02547">
    <property type="entry name" value="Queuosine_synth"/>
    <property type="match status" value="1"/>
</dbReference>
<dbReference type="SUPFAM" id="SSF111337">
    <property type="entry name" value="QueA-like"/>
    <property type="match status" value="1"/>
</dbReference>
<accession>Q5QVL1</accession>
<feature type="chain" id="PRO_0000231343" description="S-adenosylmethionine:tRNA ribosyltransferase-isomerase">
    <location>
        <begin position="1"/>
        <end position="351"/>
    </location>
</feature>
<protein>
    <recommendedName>
        <fullName evidence="1">S-adenosylmethionine:tRNA ribosyltransferase-isomerase</fullName>
        <ecNumber evidence="1">2.4.99.17</ecNumber>
    </recommendedName>
    <alternativeName>
        <fullName evidence="1">Queuosine biosynthesis protein QueA</fullName>
    </alternativeName>
</protein>
<evidence type="ECO:0000255" key="1">
    <source>
        <dbReference type="HAMAP-Rule" id="MF_00113"/>
    </source>
</evidence>